<dbReference type="EMBL" id="AY007135">
    <property type="protein sequence ID" value="AAG01998.1"/>
    <property type="molecule type" value="mRNA"/>
</dbReference>
<dbReference type="EMBL" id="BC007295">
    <property type="protein sequence ID" value="AAH07295.1"/>
    <property type="molecule type" value="mRNA"/>
</dbReference>
<dbReference type="EMBL" id="BC007850">
    <property type="protein sequence ID" value="AAH07850.1"/>
    <property type="molecule type" value="mRNA"/>
</dbReference>
<dbReference type="EMBL" id="BC008737">
    <property type="protein sequence ID" value="AAH08737.1"/>
    <property type="molecule type" value="mRNA"/>
</dbReference>
<dbReference type="EMBL" id="BC008935">
    <property type="protein sequence ID" value="AAH08935.1"/>
    <property type="molecule type" value="mRNA"/>
</dbReference>
<dbReference type="EMBL" id="BC014775">
    <property type="protein sequence ID" value="AAH14775.1"/>
    <property type="molecule type" value="mRNA"/>
</dbReference>
<dbReference type="EMBL" id="BC031912">
    <property type="protein sequence ID" value="AAH31912.1"/>
    <property type="molecule type" value="mRNA"/>
</dbReference>
<dbReference type="EMBL" id="J03592">
    <property type="protein sequence ID" value="AAA36750.1"/>
    <property type="molecule type" value="mRNA"/>
</dbReference>
<dbReference type="CCDS" id="CCDS14114.1"/>
<dbReference type="PIR" id="S03894">
    <property type="entry name" value="S03894"/>
</dbReference>
<dbReference type="RefSeq" id="NP_001627.2">
    <property type="nucleotide sequence ID" value="NM_001636.4"/>
</dbReference>
<dbReference type="SMR" id="P12236"/>
<dbReference type="BioGRID" id="106790">
    <property type="interactions" value="447"/>
</dbReference>
<dbReference type="FunCoup" id="P12236">
    <property type="interactions" value="3078"/>
</dbReference>
<dbReference type="IntAct" id="P12236">
    <property type="interactions" value="281"/>
</dbReference>
<dbReference type="MINT" id="P12236"/>
<dbReference type="STRING" id="9606.ENSP00000370808"/>
<dbReference type="ChEMBL" id="CHEMBL4105854"/>
<dbReference type="DrugBank" id="DB00720">
    <property type="generic name" value="Clodronic acid"/>
</dbReference>
<dbReference type="DrugBank" id="DB01077">
    <property type="generic name" value="Etidronic acid"/>
</dbReference>
<dbReference type="DrugCentral" id="P12236"/>
<dbReference type="TCDB" id="2.A.29.1.10">
    <property type="family name" value="the mitochondrial carrier (mc) family"/>
</dbReference>
<dbReference type="GlyGen" id="P12236">
    <property type="glycosylation" value="1 site, 1 O-linked glycan (1 site)"/>
</dbReference>
<dbReference type="iPTMnet" id="P12236"/>
<dbReference type="MetOSite" id="P12236"/>
<dbReference type="PhosphoSitePlus" id="P12236"/>
<dbReference type="SwissPalm" id="P12236"/>
<dbReference type="BioMuta" id="SLC25A6"/>
<dbReference type="DMDM" id="113463"/>
<dbReference type="jPOST" id="P12236"/>
<dbReference type="MassIVE" id="P12236"/>
<dbReference type="PaxDb" id="9606-ENSP00000370808"/>
<dbReference type="PeptideAtlas" id="P12236"/>
<dbReference type="ProteomicsDB" id="52837"/>
<dbReference type="Pumba" id="P12236"/>
<dbReference type="TopDownProteomics" id="P12236"/>
<dbReference type="Antibodypedia" id="23393">
    <property type="antibodies" value="290 antibodies from 30 providers"/>
</dbReference>
<dbReference type="DNASU" id="293"/>
<dbReference type="Ensembl" id="ENST00000381401.11">
    <property type="protein sequence ID" value="ENSP00000370808.5"/>
    <property type="gene ID" value="ENSG00000169100.14"/>
</dbReference>
<dbReference type="Ensembl" id="ENST00000711214.1">
    <property type="protein sequence ID" value="ENSP00000518609.1"/>
    <property type="gene ID" value="ENSG00000292334.1"/>
</dbReference>
<dbReference type="GeneID" id="293"/>
<dbReference type="KEGG" id="hsa:293"/>
<dbReference type="MANE-Select" id="ENST00000381401.11">
    <property type="protein sequence ID" value="ENSP00000370808.5"/>
    <property type="RefSeq nucleotide sequence ID" value="NM_001636.4"/>
    <property type="RefSeq protein sequence ID" value="NP_001627.2"/>
</dbReference>
<dbReference type="AGR" id="HGNC:10992"/>
<dbReference type="CTD" id="293"/>
<dbReference type="DisGeNET" id="293"/>
<dbReference type="GeneCards" id="SLC25A6"/>
<dbReference type="HGNC" id="HGNC:10992">
    <property type="gene designation" value="SLC25A6"/>
</dbReference>
<dbReference type="HPA" id="ENSG00000169100">
    <property type="expression patterns" value="Low tissue specificity"/>
</dbReference>
<dbReference type="MIM" id="300151">
    <property type="type" value="gene"/>
</dbReference>
<dbReference type="MIM" id="403000">
    <property type="type" value="gene"/>
</dbReference>
<dbReference type="neXtProt" id="NX_P12236"/>
<dbReference type="OpenTargets" id="ENSG00000169100"/>
<dbReference type="PharmGKB" id="PA35868"/>
<dbReference type="VEuPathDB" id="HostDB:ENSG00000169100"/>
<dbReference type="eggNOG" id="KOG0749">
    <property type="taxonomic scope" value="Eukaryota"/>
</dbReference>
<dbReference type="GeneTree" id="ENSGT00940000162883"/>
<dbReference type="HOGENOM" id="CLU_015166_12_0_1"/>
<dbReference type="InParanoid" id="P12236"/>
<dbReference type="OMA" id="CFARTLK"/>
<dbReference type="OrthoDB" id="270584at2759"/>
<dbReference type="PAN-GO" id="P12236">
    <property type="GO annotations" value="4 GO annotations based on evolutionary models"/>
</dbReference>
<dbReference type="PhylomeDB" id="P12236"/>
<dbReference type="TreeFam" id="TF300743"/>
<dbReference type="PathwayCommons" id="P12236"/>
<dbReference type="Reactome" id="R-HSA-1268020">
    <property type="pathway name" value="Mitochondrial protein import"/>
</dbReference>
<dbReference type="Reactome" id="R-HSA-168277">
    <property type="pathway name" value="Influenza Virus Induced Apoptosis"/>
</dbReference>
<dbReference type="Reactome" id="R-HSA-180897">
    <property type="pathway name" value="Vpr-mediated induction of apoptosis by mitochondrial outer membrane permeabilization"/>
</dbReference>
<dbReference type="Reactome" id="R-HSA-83936">
    <property type="pathway name" value="Transport of nucleosides and free purine and pyrimidine bases across the plasma membrane"/>
</dbReference>
<dbReference type="Reactome" id="R-HSA-9837999">
    <property type="pathway name" value="Mitochondrial protein degradation"/>
</dbReference>
<dbReference type="SignaLink" id="P12236"/>
<dbReference type="BioGRID-ORCS" id="293">
    <property type="hits" value="10 hits in 625 CRISPR screens"/>
</dbReference>
<dbReference type="CD-CODE" id="232F8A39">
    <property type="entry name" value="P-body"/>
</dbReference>
<dbReference type="CD-CODE" id="91857CE7">
    <property type="entry name" value="Nucleolus"/>
</dbReference>
<dbReference type="CD-CODE" id="FB4E32DD">
    <property type="entry name" value="Presynaptic clusters and postsynaptic densities"/>
</dbReference>
<dbReference type="ChiTaRS" id="SLC25A6">
    <property type="organism name" value="human"/>
</dbReference>
<dbReference type="GeneWiki" id="SLC25A6"/>
<dbReference type="GenomeRNAi" id="293"/>
<dbReference type="Pharos" id="P12236">
    <property type="development level" value="Tchem"/>
</dbReference>
<dbReference type="PRO" id="PR:P12236"/>
<dbReference type="Proteomes" id="UP000005640">
    <property type="component" value="Chromosome X"/>
</dbReference>
<dbReference type="Proteomes" id="UP000005640">
    <property type="component" value="Chromosome Y"/>
</dbReference>
<dbReference type="RNAct" id="P12236">
    <property type="molecule type" value="protein"/>
</dbReference>
<dbReference type="Bgee" id="ENSG00000169100">
    <property type="expression patterns" value="Expressed in cartilage tissue and 212 other cell types or tissues"/>
</dbReference>
<dbReference type="ExpressionAtlas" id="P12236">
    <property type="expression patterns" value="baseline and differential"/>
</dbReference>
<dbReference type="GO" id="GO:0016020">
    <property type="term" value="C:membrane"/>
    <property type="evidence" value="ECO:0000314"/>
    <property type="project" value="UniProtKB"/>
</dbReference>
<dbReference type="GO" id="GO:0005743">
    <property type="term" value="C:mitochondrial inner membrane"/>
    <property type="evidence" value="ECO:0000304"/>
    <property type="project" value="Reactome"/>
</dbReference>
<dbReference type="GO" id="GO:0005739">
    <property type="term" value="C:mitochondrion"/>
    <property type="evidence" value="ECO:0000314"/>
    <property type="project" value="HPA"/>
</dbReference>
<dbReference type="GO" id="GO:0005634">
    <property type="term" value="C:nucleus"/>
    <property type="evidence" value="ECO:0007005"/>
    <property type="project" value="UniProtKB"/>
</dbReference>
<dbReference type="GO" id="GO:0005744">
    <property type="term" value="C:TIM23 mitochondrial import inner membrane translocase complex"/>
    <property type="evidence" value="ECO:0000304"/>
    <property type="project" value="UniProtKB"/>
</dbReference>
<dbReference type="GO" id="GO:0005471">
    <property type="term" value="F:ATP:ADP antiporter activity"/>
    <property type="evidence" value="ECO:0000303"/>
    <property type="project" value="UniProtKB"/>
</dbReference>
<dbReference type="GO" id="GO:0006915">
    <property type="term" value="P:apoptotic process"/>
    <property type="evidence" value="ECO:0007669"/>
    <property type="project" value="UniProtKB-KW"/>
</dbReference>
<dbReference type="GO" id="GO:0140021">
    <property type="term" value="P:mitochondrial ADP transmembrane transport"/>
    <property type="evidence" value="ECO:0007669"/>
    <property type="project" value="InterPro"/>
</dbReference>
<dbReference type="GO" id="GO:1990544">
    <property type="term" value="P:mitochondrial ATP transmembrane transport"/>
    <property type="evidence" value="ECO:0007669"/>
    <property type="project" value="InterPro"/>
</dbReference>
<dbReference type="GO" id="GO:1901029">
    <property type="term" value="P:negative regulation of mitochondrial outer membrane permeabilization involved in apoptotic signaling pathway"/>
    <property type="evidence" value="ECO:0000318"/>
    <property type="project" value="GO_Central"/>
</dbReference>
<dbReference type="FunFam" id="1.50.40.10:FF:000002">
    <property type="entry name" value="Putative ADP/ATP translocase 2-like"/>
    <property type="match status" value="1"/>
</dbReference>
<dbReference type="Gene3D" id="1.50.40.10">
    <property type="entry name" value="Mitochondrial carrier domain"/>
    <property type="match status" value="1"/>
</dbReference>
<dbReference type="InterPro" id="IPR002113">
    <property type="entry name" value="ADT_euk_type"/>
</dbReference>
<dbReference type="InterPro" id="IPR002067">
    <property type="entry name" value="Mit_carrier"/>
</dbReference>
<dbReference type="InterPro" id="IPR018108">
    <property type="entry name" value="Mitochondrial_sb/sol_carrier"/>
</dbReference>
<dbReference type="InterPro" id="IPR023395">
    <property type="entry name" value="Mt_carrier_dom_sf"/>
</dbReference>
<dbReference type="PANTHER" id="PTHR45635">
    <property type="entry name" value="ADP,ATP CARRIER PROTEIN 1-RELATED-RELATED"/>
    <property type="match status" value="1"/>
</dbReference>
<dbReference type="PANTHER" id="PTHR45635:SF13">
    <property type="entry name" value="ADP_ATP TRANSLOCASE 3"/>
    <property type="match status" value="1"/>
</dbReference>
<dbReference type="Pfam" id="PF00153">
    <property type="entry name" value="Mito_carr"/>
    <property type="match status" value="3"/>
</dbReference>
<dbReference type="PRINTS" id="PR00927">
    <property type="entry name" value="ADPTRNSLCASE"/>
</dbReference>
<dbReference type="PRINTS" id="PR00926">
    <property type="entry name" value="MITOCARRIER"/>
</dbReference>
<dbReference type="SUPFAM" id="SSF103506">
    <property type="entry name" value="Mitochondrial carrier"/>
    <property type="match status" value="1"/>
</dbReference>
<dbReference type="PROSITE" id="PS50920">
    <property type="entry name" value="SOLCAR"/>
    <property type="match status" value="3"/>
</dbReference>
<comment type="function">
    <text evidence="1 5 7">ADP:ATP antiporter that mediates import of ADP into the mitochondrial matrix for ATP synthesis, and export of ATP out to fuel the cell (By similarity). Cycles between the cytoplasmic-open state (c-state) and the matrix-open state (m-state): operates by the alternating access mechanism with a single substrate-binding site intermittently exposed to either the cytosolic (c-state) or matrix (m-state) side of the inner mitochondrial membrane (By similarity). In addition to its ADP:ATP antiporter activity, also involved in mitochondrial uncoupling and mitochondrial permeability transition pore (mPTP) activity (PubMed:15033708). Plays a role in mitochondrial uncoupling by acting as a proton transporter: proton transport uncouples the proton flows via the electron transport chain and ATP synthase to reduce the efficiency of ATP production and cause mitochondrial thermogenesis (By similarity). Proton transporter activity is inhibited by ADP:ATP antiporter activity, suggesting that SLC25A6/ANT3 acts as a master regulator of mitochondrial energy output by maintaining a delicate balance between ATP production (ADP:ATP antiporter activity) and thermogenesis (proton transporter activity) (By similarity). Proton transporter activity requires free fatty acids as cofactor, but does not transport it (By similarity). Also plays a key role in mPTP opening, a non-specific pore that enables free passage of the mitochondrial membranes to solutes of up to 1.5 kDa, and which contributes to cell death (PubMed:15033708). It is however unclear if SLC25A6/ANT3 constitutes a pore-forming component of mPTP or regulates it (By similarity).</text>
</comment>
<comment type="catalytic activity">
    <reaction evidence="5">
        <text>ADP(in) + ATP(out) = ADP(out) + ATP(in)</text>
        <dbReference type="Rhea" id="RHEA:34999"/>
        <dbReference type="ChEBI" id="CHEBI:30616"/>
        <dbReference type="ChEBI" id="CHEBI:456216"/>
    </reaction>
</comment>
<comment type="catalytic activity">
    <reaction evidence="5">
        <text>H(+)(in) = H(+)(out)</text>
        <dbReference type="Rhea" id="RHEA:34979"/>
        <dbReference type="ChEBI" id="CHEBI:15378"/>
    </reaction>
</comment>
<comment type="activity regulation">
    <text evidence="1 5">The matrix-open state (m-state) is inhibited by the membrane-permeable bongkrekic acid (BKA). The cytoplasmic-open state (c-state) is inhibited by the membrane-impermeable toxic inhibitor carboxyatractyloside (CATR) (By similarity). Proton transporter activity is inhibited by ADP:ATP antiporter activity (By similarity).</text>
</comment>
<comment type="subunit">
    <text evidence="1 2 4">Monomer (By similarity). Found in a complex with ARL2, ARL2BP and SLC25A6/ANT3 (By similarity).</text>
</comment>
<comment type="subunit">
    <text evidence="9">(Microbial infection) Interacts with influenza A virus PB1-F2 protein.</text>
</comment>
<comment type="subunit">
    <text evidence="8">(Microbial infection) Interacts with HIV-1 Vpr.</text>
</comment>
<comment type="interaction">
    <interactant intactId="EBI-356254">
        <id>P12236</id>
    </interactant>
    <interactant intactId="EBI-432924">
        <id>P63010</id>
        <label>AP2B1</label>
    </interactant>
    <organismsDiffer>false</organismsDiffer>
    <experiments>4</experiments>
</comment>
<comment type="interaction">
    <interactant intactId="EBI-356254">
        <id>P12236</id>
    </interactant>
    <interactant intactId="EBI-948001">
        <id>Q15323</id>
        <label>KRT31</label>
    </interactant>
    <organismsDiffer>false</organismsDiffer>
    <experiments>3</experiments>
</comment>
<comment type="interaction">
    <interactant intactId="EBI-356254">
        <id>P12236</id>
    </interactant>
    <interactant intactId="EBI-5323863">
        <id>Q5S007</id>
        <label>LRRK2</label>
    </interactant>
    <organismsDiffer>false</organismsDiffer>
    <experiments>2</experiments>
</comment>
<comment type="interaction">
    <interactant intactId="EBI-356254">
        <id>P12236</id>
    </interactant>
    <interactant intactId="EBI-741037">
        <id>Q9BRK4</id>
        <label>LZTS2</label>
    </interactant>
    <organismsDiffer>false</organismsDiffer>
    <experiments>3</experiments>
</comment>
<comment type="interaction">
    <interactant intactId="EBI-356254">
        <id>P12236</id>
    </interactant>
    <interactant intactId="EBI-10172526">
        <id>Q9UJV3-2</id>
        <label>MID2</label>
    </interactant>
    <organismsDiffer>false</organismsDiffer>
    <experiments>3</experiments>
</comment>
<comment type="interaction">
    <interactant intactId="EBI-356254">
        <id>P12236</id>
    </interactant>
    <interactant intactId="EBI-742948">
        <id>Q5JR59</id>
        <label>MTUS2</label>
    </interactant>
    <organismsDiffer>false</organismsDiffer>
    <experiments>4</experiments>
</comment>
<comment type="interaction">
    <interactant intactId="EBI-356254">
        <id>P12236</id>
    </interactant>
    <interactant intactId="EBI-945833">
        <id>Q7Z3S9</id>
        <label>NOTCH2NLA</label>
    </interactant>
    <organismsDiffer>false</organismsDiffer>
    <experiments>3</experiments>
</comment>
<comment type="interaction">
    <interactant intactId="EBI-356254">
        <id>P12236</id>
    </interactant>
    <interactant intactId="EBI-750487">
        <id>Q8WW24</id>
        <label>TEKT4</label>
    </interactant>
    <organismsDiffer>false</organismsDiffer>
    <experiments>3</experiments>
</comment>
<comment type="interaction">
    <interactant intactId="EBI-356254">
        <id>P12236</id>
    </interactant>
    <interactant intactId="EBI-359224">
        <id>Q13077</id>
        <label>TRAF1</label>
    </interactant>
    <organismsDiffer>false</organismsDiffer>
    <experiments>3</experiments>
</comment>
<comment type="interaction">
    <interactant intactId="EBI-356254">
        <id>P12236</id>
    </interactant>
    <interactant intactId="EBI-740098">
        <id>P36406</id>
        <label>TRIM23</label>
    </interactant>
    <organismsDiffer>false</organismsDiffer>
    <experiments>3</experiments>
</comment>
<comment type="interaction">
    <interactant intactId="EBI-356254">
        <id>P12236</id>
    </interactant>
    <interactant intactId="EBI-742327">
        <id>Q15654</id>
        <label>TRIP6</label>
    </interactant>
    <organismsDiffer>false</organismsDiffer>
    <experiments>3</experiments>
</comment>
<comment type="interaction">
    <interactant intactId="EBI-356254">
        <id>P12236</id>
    </interactant>
    <interactant intactId="EBI-354158">
        <id>P21796</id>
        <label>VDAC1</label>
    </interactant>
    <organismsDiffer>false</organismsDiffer>
    <experiments>4</experiments>
</comment>
<comment type="interaction">
    <interactant intactId="EBI-356254">
        <id>P12236</id>
    </interactant>
    <interactant intactId="EBI-12579807">
        <id>P0C0U1</id>
        <label>PB1</label>
    </interactant>
    <organismsDiffer>true</organismsDiffer>
    <experiments>5</experiments>
</comment>
<comment type="subcellular location">
    <subcellularLocation>
        <location evidence="2">Mitochondrion inner membrane</location>
        <topology evidence="6">Multi-pass membrane protein</topology>
    </subcellularLocation>
    <subcellularLocation>
        <location evidence="10">Membrane</location>
        <topology evidence="6">Multi-pass membrane protein</topology>
    </subcellularLocation>
    <text evidence="3">The complex formed with ARL2BP, ARL2 and SLC25A6/ANT3 is expressed in mitochondria (By similarity). May localize to non-mitochondrial membranes (By similarity).</text>
</comment>
<comment type="tissue specificity">
    <text evidence="10">Expressed in erythrocytes (at protein level).</text>
</comment>
<comment type="domain">
    <text evidence="2">The transmembrane helices are not perpendicular to the plane of the membrane, but cross the membrane at an angle. Odd-numbered transmembrane helices exhibit a sharp kink, due to the presence of a conserved proline residue.</text>
</comment>
<comment type="PTM">
    <text evidence="11">Trimethylated by ANTKMT at Lys-52.</text>
</comment>
<comment type="miscellaneous">
    <text evidence="12">The gene coding for this protein is located in the pseudoautosomal region 1 (PAR1) of X and Y chromosomes and escapes X-inactivation.</text>
</comment>
<comment type="similarity">
    <text evidence="19">Belongs to the mitochondrial carrier (TC 2.A.29) family.</text>
</comment>
<gene>
    <name evidence="20" type="primary">SLC25A6</name>
    <name evidence="16" type="synonym">AAC3</name>
    <name evidence="17" type="synonym">ANT3</name>
    <name evidence="18" type="ORF">CDABP0051</name>
</gene>
<evidence type="ECO:0000250" key="1">
    <source>
        <dbReference type="UniProtKB" id="G2QNH0"/>
    </source>
</evidence>
<evidence type="ECO:0000250" key="2">
    <source>
        <dbReference type="UniProtKB" id="P02722"/>
    </source>
</evidence>
<evidence type="ECO:0000250" key="3">
    <source>
        <dbReference type="UniProtKB" id="P12235"/>
    </source>
</evidence>
<evidence type="ECO:0000250" key="4">
    <source>
        <dbReference type="UniProtKB" id="P32007"/>
    </source>
</evidence>
<evidence type="ECO:0000250" key="5">
    <source>
        <dbReference type="UniProtKB" id="P48962"/>
    </source>
</evidence>
<evidence type="ECO:0000255" key="6"/>
<evidence type="ECO:0000269" key="7">
    <source>
    </source>
</evidence>
<evidence type="ECO:0000269" key="8">
    <source>
    </source>
</evidence>
<evidence type="ECO:0000269" key="9">
    <source>
    </source>
</evidence>
<evidence type="ECO:0000269" key="10">
    <source>
    </source>
</evidence>
<evidence type="ECO:0000269" key="11">
    <source>
    </source>
</evidence>
<evidence type="ECO:0000269" key="12">
    <source>
    </source>
</evidence>
<evidence type="ECO:0000269" key="13">
    <source ref="2"/>
</evidence>
<evidence type="ECO:0000269" key="14">
    <source ref="4"/>
</evidence>
<evidence type="ECO:0000303" key="15">
    <source>
    </source>
</evidence>
<evidence type="ECO:0000303" key="16">
    <source>
    </source>
</evidence>
<evidence type="ECO:0000303" key="17">
    <source>
    </source>
</evidence>
<evidence type="ECO:0000303" key="18">
    <source ref="2"/>
</evidence>
<evidence type="ECO:0000305" key="19"/>
<evidence type="ECO:0000312" key="20">
    <source>
        <dbReference type="HGNC" id="HGNC:10992"/>
    </source>
</evidence>
<evidence type="ECO:0007744" key="21">
    <source>
    </source>
</evidence>
<evidence type="ECO:0007744" key="22">
    <source>
    </source>
</evidence>
<evidence type="ECO:0007744" key="23">
    <source>
    </source>
</evidence>
<evidence type="ECO:0007744" key="24">
    <source>
    </source>
</evidence>
<evidence type="ECO:0007744" key="25">
    <source>
    </source>
</evidence>
<organism>
    <name type="scientific">Homo sapiens</name>
    <name type="common">Human</name>
    <dbReference type="NCBI Taxonomy" id="9606"/>
    <lineage>
        <taxon>Eukaryota</taxon>
        <taxon>Metazoa</taxon>
        <taxon>Chordata</taxon>
        <taxon>Craniata</taxon>
        <taxon>Vertebrata</taxon>
        <taxon>Euteleostomi</taxon>
        <taxon>Mammalia</taxon>
        <taxon>Eutheria</taxon>
        <taxon>Euarchontoglires</taxon>
        <taxon>Primates</taxon>
        <taxon>Haplorrhini</taxon>
        <taxon>Catarrhini</taxon>
        <taxon>Hominidae</taxon>
        <taxon>Homo</taxon>
    </lineage>
</organism>
<accession>P12236</accession>
<accession>Q96C49</accession>
<name>ADT3_HUMAN</name>
<reference key="1">
    <citation type="journal article" date="1989" name="J. Mol. Biol.">
        <title>DNA sequences of two expressed nuclear genes for human mitochondrial ADP/ATP translocase.</title>
        <authorList>
            <person name="Cozens A.L."/>
            <person name="Runswick M.J."/>
            <person name="Walker J.E."/>
        </authorList>
    </citation>
    <scope>NUCLEOTIDE SEQUENCE [MRNA]</scope>
</reference>
<reference key="2">
    <citation type="submission" date="2000-07" db="EMBL/GenBank/DDBJ databases">
        <title>Pediatric leukemia cDNA sequencing project.</title>
        <authorList>
            <person name="Zhou J."/>
            <person name="Yu W."/>
            <person name="Tang H."/>
            <person name="Mei G."/>
            <person name="Tsang Y.T.M."/>
            <person name="Bouck J."/>
            <person name="Gibbs R.A."/>
            <person name="Margolin J.F."/>
        </authorList>
    </citation>
    <scope>NUCLEOTIDE SEQUENCE [LARGE SCALE MRNA]</scope>
    <scope>VARIANT PHE-242</scope>
    <source>
        <tissue>Leukemia</tissue>
    </source>
</reference>
<reference key="3">
    <citation type="journal article" date="2004" name="Genome Res.">
        <title>The status, quality, and expansion of the NIH full-length cDNA project: the Mammalian Gene Collection (MGC).</title>
        <authorList>
            <consortium name="The MGC Project Team"/>
        </authorList>
    </citation>
    <scope>NUCLEOTIDE SEQUENCE [LARGE SCALE MRNA]</scope>
    <source>
        <tissue>Brain</tissue>
        <tissue>Cervix</tissue>
        <tissue>Eye</tissue>
        <tissue>Lung</tissue>
    </source>
</reference>
<reference key="4">
    <citation type="submission" date="2004-07" db="UniProtKB">
        <authorList>
            <person name="Bienvenut W.V."/>
        </authorList>
    </citation>
    <scope>PROTEIN SEQUENCE OF 2-10</scope>
    <scope>ACETYLATION AT THR-2</scope>
    <scope>IDENTIFICATION BY MASS SPECTROMETRY</scope>
    <source>
        <tissue>B-cell lymphoma</tissue>
    </source>
</reference>
<reference key="5">
    <citation type="journal article" date="1988" name="Proc. Natl. Acad. Sci. U.S.A.">
        <title>Two distinct genes for ADP/ATP translocase are expressed at the mRNA level in adult human liver.</title>
        <authorList>
            <person name="Houldsworth J."/>
            <person name="Attardi G."/>
        </authorList>
    </citation>
    <scope>NUCLEOTIDE SEQUENCE [MRNA] OF 36-298</scope>
    <source>
        <tissue>Liver</tissue>
    </source>
</reference>
<reference key="6">
    <citation type="journal article" date="1993" name="Genomics">
        <title>A human pseudoautosomal gene encodes the ANT3 ADP/ATP translocase and escapes X-inactivation.</title>
        <authorList>
            <person name="Slim R."/>
            <person name="Levilliers J."/>
            <person name="Luedecke H.J."/>
            <person name="Claussen U."/>
            <person name="Nguyen V.C."/>
            <person name="Gough N.M."/>
            <person name="Horsthemke B."/>
            <person name="Petit C."/>
        </authorList>
    </citation>
    <scope>IDENTIFICATION</scope>
</reference>
<reference key="7">
    <citation type="journal article" date="2003" name="Ann. N. Y. Acad. Sci.">
        <title>Study of PTPC composition during apoptosis for identification of viral protein target.</title>
        <authorList>
            <person name="Verrier F."/>
            <person name="Mignotte B."/>
            <person name="Jan G."/>
            <person name="Brenner C."/>
        </authorList>
    </citation>
    <scope>FUNCTION IN APOPTOSIS</scope>
</reference>
<reference key="8">
    <citation type="journal article" date="2003" name="Nature">
        <title>Proteomic characterization of the human centrosome by protein correlation profiling.</title>
        <authorList>
            <person name="Andersen J.S."/>
            <person name="Wilkinson C.J."/>
            <person name="Mayor T."/>
            <person name="Mortensen P."/>
            <person name="Nigg E.A."/>
            <person name="Mann M."/>
        </authorList>
    </citation>
    <scope>IDENTIFICATION BY MASS SPECTROMETRY</scope>
    <source>
        <tissue>Lymphoblast</tissue>
    </source>
</reference>
<reference key="9">
    <citation type="journal article" date="2004" name="Mitochondrion">
        <title>Mitochondrial membrane permeabilization by HIV-1 Vpr.</title>
        <authorList>
            <person name="Deniaud A."/>
            <person name="Brenner C."/>
            <person name="Kroemer G."/>
        </authorList>
    </citation>
    <scope>INTERACTION WITH HIV-1 VPR (MICROBIAL INFECTION)</scope>
</reference>
<reference key="10">
    <citation type="journal article" date="2005" name="PLoS Pathog.">
        <title>Influenza virus PB1-F2 protein induces cell death through mitochondrial ANT3 and VDAC1.</title>
        <authorList>
            <person name="Zamarin D."/>
            <person name="Garcia-Sastre A."/>
            <person name="Xiao X."/>
            <person name="Wang R."/>
            <person name="Palese P."/>
        </authorList>
    </citation>
    <scope>INTERACTION WITH INFLUENZA A VIRUS PB1-F2 (MICROBIAL INFECTION)</scope>
</reference>
<reference key="11">
    <citation type="journal article" date="2008" name="Mol. Cell">
        <title>Kinase-selective enrichment enables quantitative phosphoproteomics of the kinome across the cell cycle.</title>
        <authorList>
            <person name="Daub H."/>
            <person name="Olsen J.V."/>
            <person name="Bairlein M."/>
            <person name="Gnad F."/>
            <person name="Oppermann F.S."/>
            <person name="Korner R."/>
            <person name="Greff Z."/>
            <person name="Keri G."/>
            <person name="Stemmann O."/>
            <person name="Mann M."/>
        </authorList>
    </citation>
    <scope>IDENTIFICATION BY MASS SPECTROMETRY [LARGE SCALE ANALYSIS]</scope>
    <source>
        <tissue>Cervix carcinoma</tissue>
    </source>
</reference>
<reference key="12">
    <citation type="journal article" date="2009" name="Anal. Chem.">
        <title>Lys-N and trypsin cover complementary parts of the phosphoproteome in a refined SCX-based approach.</title>
        <authorList>
            <person name="Gauci S."/>
            <person name="Helbig A.O."/>
            <person name="Slijper M."/>
            <person name="Krijgsveld J."/>
            <person name="Heck A.J."/>
            <person name="Mohammed S."/>
        </authorList>
    </citation>
    <scope>ACETYLATION [LARGE SCALE ANALYSIS] AT THR-2</scope>
    <scope>CLEAVAGE OF INITIATOR METHIONINE [LARGE SCALE ANALYSIS]</scope>
    <scope>IDENTIFICATION BY MASS SPECTROMETRY [LARGE SCALE ANALYSIS]</scope>
</reference>
<reference key="13">
    <citation type="journal article" date="2009" name="Science">
        <title>Lysine acetylation targets protein complexes and co-regulates major cellular functions.</title>
        <authorList>
            <person name="Choudhary C."/>
            <person name="Kumar C."/>
            <person name="Gnad F."/>
            <person name="Nielsen M.L."/>
            <person name="Rehman M."/>
            <person name="Walther T.C."/>
            <person name="Olsen J.V."/>
            <person name="Mann M."/>
        </authorList>
    </citation>
    <scope>ACETYLATION [LARGE SCALE ANALYSIS] AT LYS-105 AND LYS-268</scope>
    <scope>IDENTIFICATION BY MASS SPECTROMETRY [LARGE SCALE ANALYSIS]</scope>
</reference>
<reference key="14">
    <citation type="journal article" date="2011" name="BMC Syst. Biol.">
        <title>Initial characterization of the human central proteome.</title>
        <authorList>
            <person name="Burkard T.R."/>
            <person name="Planyavsky M."/>
            <person name="Kaupe I."/>
            <person name="Breitwieser F.P."/>
            <person name="Buerckstuemmer T."/>
            <person name="Bennett K.L."/>
            <person name="Superti-Furga G."/>
            <person name="Colinge J."/>
        </authorList>
    </citation>
    <scope>IDENTIFICATION BY MASS SPECTROMETRY [LARGE SCALE ANALYSIS]</scope>
</reference>
<reference key="15">
    <citation type="journal article" date="2012" name="Mol. Cell. Proteomics">
        <title>Comparative large-scale characterisation of plant vs. mammal proteins reveals similar and idiosyncratic N-alpha acetylation features.</title>
        <authorList>
            <person name="Bienvenut W.V."/>
            <person name="Sumpton D."/>
            <person name="Martinez A."/>
            <person name="Lilla S."/>
            <person name="Espagne C."/>
            <person name="Meinnel T."/>
            <person name="Giglione C."/>
        </authorList>
    </citation>
    <scope>ACETYLATION [LARGE SCALE ANALYSIS] AT MET-1 AND THR-2</scope>
    <scope>CLEAVAGE OF INITIATOR METHIONINE [LARGE SCALE ANALYSIS]</scope>
    <scope>IDENTIFICATION BY MASS SPECTROMETRY [LARGE SCALE ANALYSIS]</scope>
</reference>
<reference key="16">
    <citation type="journal article" date="2014" name="Mol. Cell. Proteomics">
        <title>Immunoaffinity enrichment and mass spectrometry analysis of protein methylation.</title>
        <authorList>
            <person name="Guo A."/>
            <person name="Gu H."/>
            <person name="Zhou J."/>
            <person name="Mulhern D."/>
            <person name="Wang Y."/>
            <person name="Lee K.A."/>
            <person name="Yang V."/>
            <person name="Aguiar M."/>
            <person name="Kornhauser J."/>
            <person name="Jia X."/>
            <person name="Ren J."/>
            <person name="Beausoleil S.A."/>
            <person name="Silva J.C."/>
            <person name="Vemulapalli V."/>
            <person name="Bedford M.T."/>
            <person name="Comb M.J."/>
        </authorList>
    </citation>
    <scope>METHYLATION [LARGE SCALE ANALYSIS] AT LYS-52</scope>
    <scope>IDENTIFICATION BY MASS SPECTROMETRY [LARGE SCALE ANALYSIS]</scope>
    <source>
        <tissue>Colon carcinoma</tissue>
    </source>
</reference>
<reference key="17">
    <citation type="journal article" date="2015" name="Proteomics">
        <title>N-terminome analysis of the human mitochondrial proteome.</title>
        <authorList>
            <person name="Vaca Jacome A.S."/>
            <person name="Rabilloud T."/>
            <person name="Schaeffer-Reiss C."/>
            <person name="Rompais M."/>
            <person name="Ayoub D."/>
            <person name="Lane L."/>
            <person name="Bairoch A."/>
            <person name="Van Dorsselaer A."/>
            <person name="Carapito C."/>
        </authorList>
    </citation>
    <scope>ACETYLATION [LARGE SCALE ANALYSIS] AT THR-2</scope>
    <scope>CLEAVAGE OF INITIATOR METHIONINE [LARGE SCALE ANALYSIS]</scope>
    <scope>IDENTIFICATION BY MASS SPECTROMETRY [LARGE SCALE ANALYSIS]</scope>
</reference>
<reference key="18">
    <citation type="journal article" date="2016" name="Sci. Rep.">
        <title>TSPO ligands stimulate ZnPPIX transport and ROS accumulation leading to the inhibition of P. falciparum growth in human blood.</title>
        <authorList>
            <person name="Marginedas-Freixa I."/>
            <person name="Hattab C."/>
            <person name="Bouyer G."/>
            <person name="Halle F."/>
            <person name="Chene A."/>
            <person name="Lefevre S.D."/>
            <person name="Cambot M."/>
            <person name="Cueff A."/>
            <person name="Schmitt M."/>
            <person name="Gamain B."/>
            <person name="Lacapere J.J."/>
            <person name="Egee S."/>
            <person name="Bihel F."/>
            <person name="Le Van Kim C."/>
            <person name="Ostuni M.A."/>
        </authorList>
    </citation>
    <scope>SUBCELLULAR LOCATION</scope>
    <scope>TISSUE SPECIFICITY</scope>
    <scope>IDENTIFICATION BY MASS SPECTROMETRY</scope>
</reference>
<reference key="19">
    <citation type="journal article" date="2019" name="J. Biol. Chem.">
        <title>Human FAM173A is a mitochondrial lysine-specific methyltransferase that targets adenine nucleotide translocase and affects mitochondrial respiration.</title>
        <authorList>
            <person name="Malecki J."/>
            <person name="Willemen H.L.D.M."/>
            <person name="Pinto R."/>
            <person name="Ho A.Y.Y."/>
            <person name="Moen A."/>
            <person name="Eijkelkamp N."/>
            <person name="Falnes P.O."/>
        </authorList>
    </citation>
    <scope>METHYLATION AT LYS-52</scope>
</reference>
<reference key="20">
    <citation type="journal article" date="2019" name="Nature">
        <title>H+ transport is an integral function of the mitochondrial ADP/ATP carrier.</title>
        <authorList>
            <person name="Bertholet A.M."/>
            <person name="Chouchani E.T."/>
            <person name="Kazak L."/>
            <person name="Angelin A."/>
            <person name="Fedorenko A."/>
            <person name="Long J.Z."/>
            <person name="Vidoni S."/>
            <person name="Garrity R."/>
            <person name="Cho J."/>
            <person name="Terada N."/>
            <person name="Wallace D.C."/>
            <person name="Spiegelman B.M."/>
            <person name="Kirichok Y."/>
        </authorList>
    </citation>
    <scope>GENE NAME</scope>
</reference>
<keyword id="KW-0007">Acetylation</keyword>
<keyword id="KW-0050">Antiport</keyword>
<keyword id="KW-0053">Apoptosis</keyword>
<keyword id="KW-0903">Direct protein sequencing</keyword>
<keyword id="KW-0945">Host-virus interaction</keyword>
<keyword id="KW-0472">Membrane</keyword>
<keyword id="KW-0488">Methylation</keyword>
<keyword id="KW-0496">Mitochondrion</keyword>
<keyword id="KW-0999">Mitochondrion inner membrane</keyword>
<keyword id="KW-1267">Proteomics identification</keyword>
<keyword id="KW-1185">Reference proteome</keyword>
<keyword id="KW-0677">Repeat</keyword>
<keyword id="KW-0812">Transmembrane</keyword>
<keyword id="KW-1133">Transmembrane helix</keyword>
<keyword id="KW-0813">Transport</keyword>
<sequence>MTEQAISFAKDFLAGGIAAAISKTAVAPIERVKLLLQVQHASKQIAADKQYKGIVDCIVRIPKEQGVLSFWRGNLANVIRYFPTQALNFAFKDKYKQIFLGGVDKHTQFWRYFAGNLASGGAAGATSLCFVYPLDFARTRLAADVGKSGTEREFRGLGDCLVKITKSDGIRGLYQGFSVSVQGIIIYRAAYFGVYDTAKGMLPDPKNTHIVVSWMIAQTVTAVAGVVSYPFDTVRRRMMMQSGRKGADIMYTGTVDCWRKIFRDEGGKAFFKGAWSNVLRGMGGAFVLVLYDELKKVI</sequence>
<proteinExistence type="evidence at protein level"/>
<feature type="chain" id="PRO_0000425781" description="ADP/ATP translocase 3">
    <location>
        <begin position="1"/>
        <end position="298"/>
    </location>
</feature>
<feature type="initiator methionine" description="Removed; alternate" evidence="14 21 23 25">
    <location>
        <position position="1"/>
    </location>
</feature>
<feature type="chain" id="PRO_0000090584" description="ADP/ATP translocase 3, N-terminally processed">
    <location>
        <begin position="2"/>
        <end position="298"/>
    </location>
</feature>
<feature type="topological domain" description="Mitochondrial intermembrane" evidence="19">
    <location>
        <begin position="1"/>
        <end position="7"/>
    </location>
</feature>
<feature type="transmembrane region" description="Helical; Name=1" evidence="2">
    <location>
        <begin position="8"/>
        <end position="37"/>
    </location>
</feature>
<feature type="topological domain" description="Mitochondrial matrix" evidence="19">
    <location>
        <begin position="38"/>
        <end position="74"/>
    </location>
</feature>
<feature type="transmembrane region" description="Helical; Name=2" evidence="2">
    <location>
        <begin position="75"/>
        <end position="99"/>
    </location>
</feature>
<feature type="topological domain" description="Mitochondrial intermembrane" evidence="19">
    <location>
        <begin position="100"/>
        <end position="109"/>
    </location>
</feature>
<feature type="transmembrane region" description="Helical; Name=3" evidence="2">
    <location>
        <begin position="110"/>
        <end position="130"/>
    </location>
</feature>
<feature type="topological domain" description="Mitochondrial matrix" evidence="19">
    <location>
        <begin position="131"/>
        <end position="178"/>
    </location>
</feature>
<feature type="transmembrane region" description="Helical; Name=4" evidence="2">
    <location>
        <begin position="179"/>
        <end position="199"/>
    </location>
</feature>
<feature type="topological domain" description="Mitochondrial intermembrane" evidence="19">
    <location>
        <begin position="200"/>
        <end position="210"/>
    </location>
</feature>
<feature type="transmembrane region" description="Helical; Name=5" evidence="2">
    <location>
        <begin position="211"/>
        <end position="231"/>
    </location>
</feature>
<feature type="topological domain" description="Mitochondrial matrix" evidence="19">
    <location>
        <begin position="232"/>
        <end position="273"/>
    </location>
</feature>
<feature type="transmembrane region" description="Helical; Name=6" evidence="2">
    <location>
        <begin position="274"/>
        <end position="291"/>
    </location>
</feature>
<feature type="topological domain" description="Mitochondrial intermembrane" evidence="19">
    <location>
        <begin position="292"/>
        <end position="298"/>
    </location>
</feature>
<feature type="repeat" description="Solcar 1">
    <location>
        <begin position="6"/>
        <end position="98"/>
    </location>
</feature>
<feature type="repeat" description="Solcar 2">
    <location>
        <begin position="111"/>
        <end position="201"/>
    </location>
</feature>
<feature type="repeat" description="Solcar 3">
    <location>
        <begin position="212"/>
        <end position="297"/>
    </location>
</feature>
<feature type="region of interest" description="Important for transport activity" evidence="3">
    <location>
        <begin position="235"/>
        <end position="240"/>
    </location>
</feature>
<feature type="short sequence motif" description="Nucleotide carrier signature motif" evidence="2">
    <location>
        <begin position="235"/>
        <end position="240"/>
    </location>
</feature>
<feature type="binding site" evidence="2">
    <location>
        <position position="80"/>
    </location>
    <ligand>
        <name>ADP</name>
        <dbReference type="ChEBI" id="CHEBI:456216"/>
    </ligand>
</feature>
<feature type="binding site" evidence="2">
    <location>
        <position position="92"/>
    </location>
    <ligand>
        <name>ADP</name>
        <dbReference type="ChEBI" id="CHEBI:456216"/>
    </ligand>
</feature>
<feature type="binding site" evidence="2">
    <location>
        <position position="235"/>
    </location>
    <ligand>
        <name>ADP</name>
        <dbReference type="ChEBI" id="CHEBI:456216"/>
    </ligand>
</feature>
<feature type="modified residue" description="N-acetylmethionine" evidence="23">
    <location>
        <position position="1"/>
    </location>
</feature>
<feature type="modified residue" description="N-acetylthreonine; in ADP/ATP translocase 3, N-terminally processed" evidence="14 21 23 25">
    <location>
        <position position="2"/>
    </location>
</feature>
<feature type="modified residue" description="N6,N6,N6-trimethyllysine" evidence="11 24">
    <location>
        <position position="52"/>
    </location>
</feature>
<feature type="modified residue" description="N6-acetyllysine" evidence="22">
    <location>
        <position position="105"/>
    </location>
</feature>
<feature type="modified residue" description="N6-acetyllysine" evidence="22">
    <location>
        <position position="268"/>
    </location>
</feature>
<feature type="sequence variant" id="VAR_054819" evidence="13">
    <original>S</original>
    <variation>F</variation>
    <location>
        <position position="242"/>
    </location>
</feature>
<feature type="sequence conflict" description="In Ref. 5; AAA36750." evidence="19" ref="5">
    <original>KHTQ</original>
    <variation>RHA</variation>
    <location>
        <begin position="105"/>
        <end position="108"/>
    </location>
</feature>
<protein>
    <recommendedName>
        <fullName evidence="19">ADP/ATP translocase 3</fullName>
    </recommendedName>
    <alternativeName>
        <fullName evidence="16">ADP,ATP carrier protein 3</fullName>
    </alternativeName>
    <alternativeName>
        <fullName evidence="15">ADP,ATP carrier protein, isoform T2</fullName>
        <shortName evidence="15">ANT 2</shortName>
    </alternativeName>
    <alternativeName>
        <fullName evidence="17">Adenine nucleotide translocator 3</fullName>
        <shortName evidence="17">ANT 3</shortName>
    </alternativeName>
    <alternativeName>
        <fullName evidence="19">Solute carrier family 25 member 6</fullName>
    </alternativeName>
    <component>
        <recommendedName>
            <fullName>ADP/ATP translocase 3, N-terminally processed</fullName>
        </recommendedName>
    </component>
</protein>